<comment type="function">
    <text evidence="4">Probable immunoglobulin-like cell surface receptor. On binding with CD47, mediates cell-cell adhesion. Engagement on T-cells by CD47 on antigen-presenting cells results in enhanced antigen-specific T-cell proliferation and costimulates T-cell activation.</text>
</comment>
<comment type="subunit">
    <text evidence="4">Interacts with CD47.</text>
</comment>
<comment type="interaction">
    <interactant intactId="EBI-1268284">
        <id>Q9P1W8</id>
    </interactant>
    <interactant intactId="EBI-1268321">
        <id>Q08722</id>
        <label>CD47</label>
    </interactant>
    <organismsDiffer>false</organismsDiffer>
    <experiments>2</experiments>
</comment>
<comment type="interaction">
    <interactant intactId="EBI-1268284">
        <id>Q9P1W8</id>
    </interactant>
    <interactant intactId="EBI-852851">
        <id>P01100</id>
        <label>FOS</label>
    </interactant>
    <organismsDiffer>false</organismsDiffer>
    <experiments>3</experiments>
</comment>
<comment type="interaction">
    <interactant intactId="EBI-1268284">
        <id>Q9P1W8</id>
    </interactant>
    <interactant intactId="EBI-2552594">
        <id>P50440</id>
        <label>GATM</label>
    </interactant>
    <organismsDiffer>false</organismsDiffer>
    <experiments>3</experiments>
</comment>
<comment type="subcellular location">
    <subcellularLocation>
        <location evidence="4">Membrane</location>
        <topology evidence="4">Single-pass type I membrane protein</topology>
    </subcellularLocation>
</comment>
<comment type="alternative products">
    <event type="alternative splicing"/>
    <isoform>
        <id>Q9P1W8-1</id>
        <name>1</name>
        <sequence type="displayed"/>
    </isoform>
    <isoform>
        <id>Q9P1W8-2</id>
        <name>2</name>
        <sequence type="described" ref="VSP_007027"/>
    </isoform>
    <isoform>
        <id>Q9P1W8-3</id>
        <name>3</name>
        <sequence type="described" ref="VSP_007028"/>
    </isoform>
    <isoform>
        <id>Q9P1W8-4</id>
        <name>4</name>
        <sequence type="described" ref="VSP_026960"/>
    </isoform>
</comment>
<comment type="tissue specificity">
    <text evidence="3 4">Detected in liver, and at very low levels in brain, heart, lung, pancreas, kidney, placenta and skeletal muscle. Expressed on CD4+ T-cells, CD8+ T-cells, CD56-bright natural killer (NK) cells, CD20+ cells, and all activated NK cells. Mainly present in the paracortical T-cell area of lymph nodes, with only sparse positive cells in the mantle and in the germinal center of B-cell follicles. In the thymus, primarily expressed in the medulla on mature T-lymphocytes that have undergone thymic selection.</text>
</comment>
<sequence length="387" mass="42498">MPVPASWPHPPGPFLLLTLLLGLTEVAGEEELQMIQPEKLLLVTVGKTATLHCTVTSLLPVGPVLWFRGVGPGRELIYNQKEGHFPRVTTVSDLTKRNNMDFSIRISSITPADVGTYYCVKFRKGSPENVEFKSGPGTEMALGAKPSAPVVLGPAARTTPEHTVSFTCESHGFSPRDITLKWFKNGNELSDFQTNVDPTGQSVAYSIRSTARVVLDPWDVRSQVICEVAHVTLQGDPLRGTANLSEAIRVPPTLEVTQQPMRVGNQVNVTCQVRKFYPQSLQLTWSENGNVCQRETASTLTENKDGTYNWTSWFLVNISDQRDDVVLTCQVKHDGQLAVSKRLALEVTVHQKDQSSDATPGPASSLTALLLIAVLLGPIYVPWKQKT</sequence>
<proteinExistence type="evidence at protein level"/>
<name>SIRPG_HUMAN</name>
<dbReference type="EMBL" id="AB042624">
    <property type="protein sequence ID" value="BAA95692.1"/>
    <property type="molecule type" value="mRNA"/>
</dbReference>
<dbReference type="EMBL" id="AY748247">
    <property type="protein sequence ID" value="AAV88530.1"/>
    <property type="molecule type" value="mRNA"/>
</dbReference>
<dbReference type="EMBL" id="AY748248">
    <property type="protein sequence ID" value="AAV88531.1"/>
    <property type="molecule type" value="mRNA"/>
</dbReference>
<dbReference type="EMBL" id="AL109809">
    <property type="status" value="NOT_ANNOTATED_CDS"/>
    <property type="molecule type" value="Genomic_DNA"/>
</dbReference>
<dbReference type="EMBL" id="AL138804">
    <property type="status" value="NOT_ANNOTATED_CDS"/>
    <property type="molecule type" value="Genomic_DNA"/>
</dbReference>
<dbReference type="EMBL" id="CH471133">
    <property type="protein sequence ID" value="EAX10616.1"/>
    <property type="molecule type" value="Genomic_DNA"/>
</dbReference>
<dbReference type="EMBL" id="BC020629">
    <property type="protein sequence ID" value="AAH20629.2"/>
    <property type="molecule type" value="mRNA"/>
</dbReference>
<dbReference type="EMBL" id="BC064532">
    <property type="protein sequence ID" value="AAH64532.1"/>
    <property type="molecule type" value="mRNA"/>
</dbReference>
<dbReference type="CCDS" id="CCDS13020.2">
    <molecule id="Q9P1W8-1"/>
</dbReference>
<dbReference type="CCDS" id="CCDS13021.2">
    <molecule id="Q9P1W8-3"/>
</dbReference>
<dbReference type="CCDS" id="CCDS33434.1">
    <molecule id="Q9P1W8-4"/>
</dbReference>
<dbReference type="RefSeq" id="NP_001034597.1">
    <molecule id="Q9P1W8-4"/>
    <property type="nucleotide sequence ID" value="NM_001039508.2"/>
</dbReference>
<dbReference type="RefSeq" id="NP_061026.2">
    <molecule id="Q9P1W8-1"/>
    <property type="nucleotide sequence ID" value="NM_018556.4"/>
</dbReference>
<dbReference type="RefSeq" id="NP_543006.2">
    <molecule id="Q9P1W8-3"/>
    <property type="nucleotide sequence ID" value="NM_080816.3"/>
</dbReference>
<dbReference type="RefSeq" id="XP_011527588.1">
    <molecule id="Q9P1W8-2"/>
    <property type="nucleotide sequence ID" value="XM_011529286.3"/>
</dbReference>
<dbReference type="RefSeq" id="XP_054179602.1">
    <molecule id="Q9P1W8-2"/>
    <property type="nucleotide sequence ID" value="XM_054323627.1"/>
</dbReference>
<dbReference type="PDB" id="2JJW">
    <property type="method" value="X-ray"/>
    <property type="resolution" value="1.70 A"/>
    <property type="chains" value="A=29-147"/>
</dbReference>
<dbReference type="PDB" id="4I2X">
    <property type="method" value="X-ray"/>
    <property type="resolution" value="2.48 A"/>
    <property type="chains" value="E/F=29-347"/>
</dbReference>
<dbReference type="PDBsum" id="2JJW"/>
<dbReference type="PDBsum" id="4I2X"/>
<dbReference type="SMR" id="Q9P1W8"/>
<dbReference type="BioGRID" id="120664">
    <property type="interactions" value="3"/>
</dbReference>
<dbReference type="FunCoup" id="Q9P1W8">
    <property type="interactions" value="436"/>
</dbReference>
<dbReference type="IntAct" id="Q9P1W8">
    <property type="interactions" value="5"/>
</dbReference>
<dbReference type="STRING" id="9606.ENSP00000305529"/>
<dbReference type="GlyCosmos" id="Q9P1W8">
    <property type="glycosylation" value="4 sites, No reported glycans"/>
</dbReference>
<dbReference type="GlyGen" id="Q9P1W8">
    <property type="glycosylation" value="6 sites, 1 O-linked glycan (1 site)"/>
</dbReference>
<dbReference type="iPTMnet" id="Q9P1W8"/>
<dbReference type="PhosphoSitePlus" id="Q9P1W8"/>
<dbReference type="BioMuta" id="SIRPG"/>
<dbReference type="DMDM" id="124053651"/>
<dbReference type="jPOST" id="Q9P1W8"/>
<dbReference type="MassIVE" id="Q9P1W8"/>
<dbReference type="PaxDb" id="9606-ENSP00000305529"/>
<dbReference type="PeptideAtlas" id="Q9P1W8"/>
<dbReference type="ProteomicsDB" id="83672">
    <molecule id="Q9P1W8-1"/>
</dbReference>
<dbReference type="ProteomicsDB" id="83673">
    <molecule id="Q9P1W8-2"/>
</dbReference>
<dbReference type="ProteomicsDB" id="83674">
    <molecule id="Q9P1W8-3"/>
</dbReference>
<dbReference type="ProteomicsDB" id="83675">
    <molecule id="Q9P1W8-4"/>
</dbReference>
<dbReference type="ABCD" id="Q9P1W8">
    <property type="antibodies" value="2 sequenced antibodies"/>
</dbReference>
<dbReference type="Antibodypedia" id="6584">
    <property type="antibodies" value="344 antibodies from 34 providers"/>
</dbReference>
<dbReference type="DNASU" id="55423"/>
<dbReference type="Ensembl" id="ENST00000216927.4">
    <molecule id="Q9P1W8-4"/>
    <property type="protein sequence ID" value="ENSP00000216927.4"/>
    <property type="gene ID" value="ENSG00000089012.14"/>
</dbReference>
<dbReference type="Ensembl" id="ENST00000303415.7">
    <molecule id="Q9P1W8-1"/>
    <property type="protein sequence ID" value="ENSP00000305529.3"/>
    <property type="gene ID" value="ENSG00000089012.14"/>
</dbReference>
<dbReference type="Ensembl" id="ENST00000344103.8">
    <molecule id="Q9P1W8-3"/>
    <property type="protein sequence ID" value="ENSP00000342759.4"/>
    <property type="gene ID" value="ENSG00000089012.14"/>
</dbReference>
<dbReference type="Ensembl" id="ENST00000381580.5">
    <molecule id="Q9P1W8-2"/>
    <property type="protein sequence ID" value="ENSP00000370992.1"/>
    <property type="gene ID" value="ENSG00000089012.14"/>
</dbReference>
<dbReference type="Ensembl" id="ENST00000381583.6">
    <molecule id="Q9P1W8-4"/>
    <property type="protein sequence ID" value="ENSP00000370995.2"/>
    <property type="gene ID" value="ENSG00000089012.14"/>
</dbReference>
<dbReference type="GeneID" id="55423"/>
<dbReference type="KEGG" id="hsa:55423"/>
<dbReference type="MANE-Select" id="ENST00000303415.7">
    <property type="protein sequence ID" value="ENSP00000305529.3"/>
    <property type="RefSeq nucleotide sequence ID" value="NM_018556.4"/>
    <property type="RefSeq protein sequence ID" value="NP_061026.2"/>
</dbReference>
<dbReference type="UCSC" id="uc002wfm.1">
    <molecule id="Q9P1W8-1"/>
    <property type="organism name" value="human"/>
</dbReference>
<dbReference type="AGR" id="HGNC:15757"/>
<dbReference type="CTD" id="55423"/>
<dbReference type="DisGeNET" id="55423"/>
<dbReference type="GeneCards" id="SIRPG"/>
<dbReference type="HGNC" id="HGNC:15757">
    <property type="gene designation" value="SIRPG"/>
</dbReference>
<dbReference type="HPA" id="ENSG00000089012">
    <property type="expression patterns" value="Tissue enriched (lymphoid)"/>
</dbReference>
<dbReference type="MIM" id="605466">
    <property type="type" value="gene"/>
</dbReference>
<dbReference type="neXtProt" id="NX_Q9P1W8"/>
<dbReference type="OpenTargets" id="ENSG00000089012"/>
<dbReference type="PharmGKB" id="PA38034"/>
<dbReference type="VEuPathDB" id="HostDB:ENSG00000089012"/>
<dbReference type="eggNOG" id="ENOG502S1XD">
    <property type="taxonomic scope" value="Eukaryota"/>
</dbReference>
<dbReference type="GeneTree" id="ENSGT00960000186656"/>
<dbReference type="HOGENOM" id="CLU_044430_0_0_1"/>
<dbReference type="InParanoid" id="Q9P1W8"/>
<dbReference type="OMA" id="ISHREIG"/>
<dbReference type="OrthoDB" id="6370831at2759"/>
<dbReference type="PAN-GO" id="Q9P1W8">
    <property type="GO annotations" value="3 GO annotations based on evolutionary models"/>
</dbReference>
<dbReference type="PhylomeDB" id="Q9P1W8"/>
<dbReference type="TreeFam" id="TF341862"/>
<dbReference type="PathwayCommons" id="Q9P1W8"/>
<dbReference type="Reactome" id="R-HSA-202733">
    <property type="pathway name" value="Cell surface interactions at the vascular wall"/>
</dbReference>
<dbReference type="Reactome" id="R-HSA-391160">
    <property type="pathway name" value="Signal regulatory protein family interactions"/>
</dbReference>
<dbReference type="SignaLink" id="Q9P1W8"/>
<dbReference type="BioGRID-ORCS" id="55423">
    <property type="hits" value="14 hits in 1143 CRISPR screens"/>
</dbReference>
<dbReference type="EvolutionaryTrace" id="Q9P1W8"/>
<dbReference type="GeneWiki" id="SIRPG"/>
<dbReference type="GenomeRNAi" id="55423"/>
<dbReference type="Pharos" id="Q9P1W8">
    <property type="development level" value="Tbio"/>
</dbReference>
<dbReference type="PRO" id="PR:Q9P1W8"/>
<dbReference type="Proteomes" id="UP000005640">
    <property type="component" value="Chromosome 20"/>
</dbReference>
<dbReference type="RNAct" id="Q9P1W8">
    <property type="molecule type" value="protein"/>
</dbReference>
<dbReference type="Bgee" id="ENSG00000089012">
    <property type="expression patterns" value="Expressed in male germ line stem cell (sensu Vertebrata) in testis and 111 other cell types or tissues"/>
</dbReference>
<dbReference type="GO" id="GO:0016020">
    <property type="term" value="C:membrane"/>
    <property type="evidence" value="ECO:0000314"/>
    <property type="project" value="UniProtKB"/>
</dbReference>
<dbReference type="GO" id="GO:0005886">
    <property type="term" value="C:plasma membrane"/>
    <property type="evidence" value="ECO:0000318"/>
    <property type="project" value="GO_Central"/>
</dbReference>
<dbReference type="GO" id="GO:0007155">
    <property type="term" value="P:cell adhesion"/>
    <property type="evidence" value="ECO:0007669"/>
    <property type="project" value="UniProtKB-KW"/>
</dbReference>
<dbReference type="GO" id="GO:0007267">
    <property type="term" value="P:cell-cell signaling"/>
    <property type="evidence" value="ECO:0000304"/>
    <property type="project" value="ProtInc"/>
</dbReference>
<dbReference type="GO" id="GO:0035556">
    <property type="term" value="P:intracellular signal transduction"/>
    <property type="evidence" value="ECO:0000304"/>
    <property type="project" value="ProtInc"/>
</dbReference>
<dbReference type="GO" id="GO:0008285">
    <property type="term" value="P:negative regulation of cell population proliferation"/>
    <property type="evidence" value="ECO:0000304"/>
    <property type="project" value="ProtInc"/>
</dbReference>
<dbReference type="GO" id="GO:0008284">
    <property type="term" value="P:positive regulation of cell population proliferation"/>
    <property type="evidence" value="ECO:0000314"/>
    <property type="project" value="UniProtKB"/>
</dbReference>
<dbReference type="GO" id="GO:0022409">
    <property type="term" value="P:positive regulation of cell-cell adhesion"/>
    <property type="evidence" value="ECO:0000314"/>
    <property type="project" value="UniProtKB"/>
</dbReference>
<dbReference type="GO" id="GO:0050766">
    <property type="term" value="P:positive regulation of phagocytosis"/>
    <property type="evidence" value="ECO:0000318"/>
    <property type="project" value="GO_Central"/>
</dbReference>
<dbReference type="GO" id="GO:0050870">
    <property type="term" value="P:positive regulation of T cell activation"/>
    <property type="evidence" value="ECO:0000314"/>
    <property type="project" value="UniProtKB"/>
</dbReference>
<dbReference type="CDD" id="cd05772">
    <property type="entry name" value="IgC1_SIRP_domain_2"/>
    <property type="match status" value="1"/>
</dbReference>
<dbReference type="CDD" id="cd16085">
    <property type="entry name" value="IgC1_SIRP_domain_3"/>
    <property type="match status" value="1"/>
</dbReference>
<dbReference type="CDD" id="cd16097">
    <property type="entry name" value="IgV_SIRP"/>
    <property type="match status" value="1"/>
</dbReference>
<dbReference type="FunFam" id="2.60.40.10:FF:000490">
    <property type="entry name" value="Signal-regulatory protein beta 1"/>
    <property type="match status" value="1"/>
</dbReference>
<dbReference type="FunFam" id="2.60.40.10:FF:000295">
    <property type="entry name" value="Tyrosine-protein phosphatase non-receptor type substrate 1"/>
    <property type="match status" value="1"/>
</dbReference>
<dbReference type="FunFam" id="2.60.40.10:FF:000454">
    <property type="entry name" value="Tyrosine-protein phosphatase non-receptor type substrate 1"/>
    <property type="match status" value="1"/>
</dbReference>
<dbReference type="Gene3D" id="2.60.40.10">
    <property type="entry name" value="Immunoglobulins"/>
    <property type="match status" value="3"/>
</dbReference>
<dbReference type="InterPro" id="IPR051755">
    <property type="entry name" value="Ig-like_CS_Receptor"/>
</dbReference>
<dbReference type="InterPro" id="IPR007110">
    <property type="entry name" value="Ig-like_dom"/>
</dbReference>
<dbReference type="InterPro" id="IPR036179">
    <property type="entry name" value="Ig-like_dom_sf"/>
</dbReference>
<dbReference type="InterPro" id="IPR013783">
    <property type="entry name" value="Ig-like_fold"/>
</dbReference>
<dbReference type="InterPro" id="IPR003597">
    <property type="entry name" value="Ig_C1-set"/>
</dbReference>
<dbReference type="InterPro" id="IPR003599">
    <property type="entry name" value="Ig_sub"/>
</dbReference>
<dbReference type="InterPro" id="IPR013106">
    <property type="entry name" value="Ig_V-set"/>
</dbReference>
<dbReference type="PANTHER" id="PTHR19971">
    <property type="entry name" value="SIGNAL-REGULATORY PROTEIN BETA"/>
    <property type="match status" value="1"/>
</dbReference>
<dbReference type="Pfam" id="PF07654">
    <property type="entry name" value="C1-set"/>
    <property type="match status" value="2"/>
</dbReference>
<dbReference type="Pfam" id="PF07686">
    <property type="entry name" value="V-set"/>
    <property type="match status" value="1"/>
</dbReference>
<dbReference type="SMART" id="SM00409">
    <property type="entry name" value="IG"/>
    <property type="match status" value="2"/>
</dbReference>
<dbReference type="SMART" id="SM00407">
    <property type="entry name" value="IGc1"/>
    <property type="match status" value="2"/>
</dbReference>
<dbReference type="SMART" id="SM00406">
    <property type="entry name" value="IGv"/>
    <property type="match status" value="1"/>
</dbReference>
<dbReference type="SUPFAM" id="SSF48726">
    <property type="entry name" value="Immunoglobulin"/>
    <property type="match status" value="3"/>
</dbReference>
<dbReference type="PROSITE" id="PS50835">
    <property type="entry name" value="IG_LIKE"/>
    <property type="match status" value="3"/>
</dbReference>
<reference key="1">
    <citation type="journal article" date="2000" name="J. Hum. Genet.">
        <title>Molecular cloning of a novel human gene (SIRP-B2) which encodes a new member of the SIRP/SHPS-1 protein family.</title>
        <authorList>
            <person name="Ichigotani Y."/>
            <person name="Matsuda S."/>
            <person name="Machida K."/>
            <person name="Oshima K."/>
            <person name="Iwamoto T."/>
            <person name="Yamaki K."/>
            <person name="Hayakawa T."/>
            <person name="Hamaguchi M."/>
        </authorList>
    </citation>
    <scope>NUCLEOTIDE SEQUENCE [MRNA] (ISOFORM 2)</scope>
    <scope>TISSUE SPECIFICITY</scope>
    <scope>VARIANTS ALA-263 AND LEU-286</scope>
    <source>
        <tissue>Placenta</tissue>
    </source>
</reference>
<reference key="2">
    <citation type="journal article" date="2005" name="Blood">
        <title>Adhesion of human T cells to antigen-presenting cells through SIRPbeta2-CD47 interaction costimulates T-cell proliferation.</title>
        <authorList>
            <person name="Piccio L."/>
            <person name="Vermi W."/>
            <person name="Boles K.S."/>
            <person name="Fuchs A."/>
            <person name="Strader C.A."/>
            <person name="Facchetti F."/>
            <person name="Cella M."/>
            <person name="Colonna M."/>
        </authorList>
    </citation>
    <scope>NUCLEOTIDE SEQUENCE [MRNA] (ISOFORM 4)</scope>
    <scope>FUNCTION</scope>
    <scope>INTERACTION WITH CD47</scope>
    <scope>SUBCELLULAR LOCATION</scope>
    <scope>TISSUE SPECIFICITY</scope>
    <source>
        <tissue>T-cell</tissue>
    </source>
</reference>
<reference key="3">
    <citation type="journal article" date="2001" name="Nature">
        <title>The DNA sequence and comparative analysis of human chromosome 20.</title>
        <authorList>
            <person name="Deloukas P."/>
            <person name="Matthews L.H."/>
            <person name="Ashurst J.L."/>
            <person name="Burton J."/>
            <person name="Gilbert J.G.R."/>
            <person name="Jones M."/>
            <person name="Stavrides G."/>
            <person name="Almeida J.P."/>
            <person name="Babbage A.K."/>
            <person name="Bagguley C.L."/>
            <person name="Bailey J."/>
            <person name="Barlow K.F."/>
            <person name="Bates K.N."/>
            <person name="Beard L.M."/>
            <person name="Beare D.M."/>
            <person name="Beasley O.P."/>
            <person name="Bird C.P."/>
            <person name="Blakey S.E."/>
            <person name="Bridgeman A.M."/>
            <person name="Brown A.J."/>
            <person name="Buck D."/>
            <person name="Burrill W.D."/>
            <person name="Butler A.P."/>
            <person name="Carder C."/>
            <person name="Carter N.P."/>
            <person name="Chapman J.C."/>
            <person name="Clamp M."/>
            <person name="Clark G."/>
            <person name="Clark L.N."/>
            <person name="Clark S.Y."/>
            <person name="Clee C.M."/>
            <person name="Clegg S."/>
            <person name="Cobley V.E."/>
            <person name="Collier R.E."/>
            <person name="Connor R.E."/>
            <person name="Corby N.R."/>
            <person name="Coulson A."/>
            <person name="Coville G.J."/>
            <person name="Deadman R."/>
            <person name="Dhami P.D."/>
            <person name="Dunn M."/>
            <person name="Ellington A.G."/>
            <person name="Frankland J.A."/>
            <person name="Fraser A."/>
            <person name="French L."/>
            <person name="Garner P."/>
            <person name="Grafham D.V."/>
            <person name="Griffiths C."/>
            <person name="Griffiths M.N.D."/>
            <person name="Gwilliam R."/>
            <person name="Hall R.E."/>
            <person name="Hammond S."/>
            <person name="Harley J.L."/>
            <person name="Heath P.D."/>
            <person name="Ho S."/>
            <person name="Holden J.L."/>
            <person name="Howden P.J."/>
            <person name="Huckle E."/>
            <person name="Hunt A.R."/>
            <person name="Hunt S.E."/>
            <person name="Jekosch K."/>
            <person name="Johnson C.M."/>
            <person name="Johnson D."/>
            <person name="Kay M.P."/>
            <person name="Kimberley A.M."/>
            <person name="King A."/>
            <person name="Knights A."/>
            <person name="Laird G.K."/>
            <person name="Lawlor S."/>
            <person name="Lehvaeslaiho M.H."/>
            <person name="Leversha M.A."/>
            <person name="Lloyd C."/>
            <person name="Lloyd D.M."/>
            <person name="Lovell J.D."/>
            <person name="Marsh V.L."/>
            <person name="Martin S.L."/>
            <person name="McConnachie L.J."/>
            <person name="McLay K."/>
            <person name="McMurray A.A."/>
            <person name="Milne S.A."/>
            <person name="Mistry D."/>
            <person name="Moore M.J.F."/>
            <person name="Mullikin J.C."/>
            <person name="Nickerson T."/>
            <person name="Oliver K."/>
            <person name="Parker A."/>
            <person name="Patel R."/>
            <person name="Pearce T.A.V."/>
            <person name="Peck A.I."/>
            <person name="Phillimore B.J.C.T."/>
            <person name="Prathalingam S.R."/>
            <person name="Plumb R.W."/>
            <person name="Ramsay H."/>
            <person name="Rice C.M."/>
            <person name="Ross M.T."/>
            <person name="Scott C.E."/>
            <person name="Sehra H.K."/>
            <person name="Shownkeen R."/>
            <person name="Sims S."/>
            <person name="Skuce C.D."/>
            <person name="Smith M.L."/>
            <person name="Soderlund C."/>
            <person name="Steward C.A."/>
            <person name="Sulston J.E."/>
            <person name="Swann R.M."/>
            <person name="Sycamore N."/>
            <person name="Taylor R."/>
            <person name="Tee L."/>
            <person name="Thomas D.W."/>
            <person name="Thorpe A."/>
            <person name="Tracey A."/>
            <person name="Tromans A.C."/>
            <person name="Vaudin M."/>
            <person name="Wall M."/>
            <person name="Wallis J.M."/>
            <person name="Whitehead S.L."/>
            <person name="Whittaker P."/>
            <person name="Willey D.L."/>
            <person name="Williams L."/>
            <person name="Williams S.A."/>
            <person name="Wilming L."/>
            <person name="Wray P.W."/>
            <person name="Hubbard T."/>
            <person name="Durbin R.M."/>
            <person name="Bentley D.R."/>
            <person name="Beck S."/>
            <person name="Rogers J."/>
        </authorList>
    </citation>
    <scope>NUCLEOTIDE SEQUENCE [LARGE SCALE GENOMIC DNA]</scope>
</reference>
<reference key="4">
    <citation type="submission" date="2005-09" db="EMBL/GenBank/DDBJ databases">
        <authorList>
            <person name="Mural R.J."/>
            <person name="Istrail S."/>
            <person name="Sutton G.G."/>
            <person name="Florea L."/>
            <person name="Halpern A.L."/>
            <person name="Mobarry C.M."/>
            <person name="Lippert R."/>
            <person name="Walenz B."/>
            <person name="Shatkay H."/>
            <person name="Dew I."/>
            <person name="Miller J.R."/>
            <person name="Flanigan M.J."/>
            <person name="Edwards N.J."/>
            <person name="Bolanos R."/>
            <person name="Fasulo D."/>
            <person name="Halldorsson B.V."/>
            <person name="Hannenhalli S."/>
            <person name="Turner R."/>
            <person name="Yooseph S."/>
            <person name="Lu F."/>
            <person name="Nusskern D.R."/>
            <person name="Shue B.C."/>
            <person name="Zheng X.H."/>
            <person name="Zhong F."/>
            <person name="Delcher A.L."/>
            <person name="Huson D.H."/>
            <person name="Kravitz S.A."/>
            <person name="Mouchard L."/>
            <person name="Reinert K."/>
            <person name="Remington K.A."/>
            <person name="Clark A.G."/>
            <person name="Waterman M.S."/>
            <person name="Eichler E.E."/>
            <person name="Adams M.D."/>
            <person name="Hunkapiller M.W."/>
            <person name="Myers E.W."/>
            <person name="Venter J.C."/>
        </authorList>
    </citation>
    <scope>NUCLEOTIDE SEQUENCE [LARGE SCALE GENOMIC DNA]</scope>
</reference>
<reference key="5">
    <citation type="journal article" date="2004" name="Genome Res.">
        <title>The status, quality, and expansion of the NIH full-length cDNA project: the Mammalian Gene Collection (MGC).</title>
        <authorList>
            <consortium name="The MGC Project Team"/>
        </authorList>
    </citation>
    <scope>NUCLEOTIDE SEQUENCE [LARGE SCALE MRNA] (ISOFORMS 1 AND 3)</scope>
    <source>
        <tissue>Lung</tissue>
        <tissue>Ovary</tissue>
    </source>
</reference>
<reference key="6">
    <citation type="journal article" date="2009" name="Nat. Biotechnol.">
        <title>Mass-spectrometric identification and relative quantification of N-linked cell surface glycoproteins.</title>
        <authorList>
            <person name="Wollscheid B."/>
            <person name="Bausch-Fluck D."/>
            <person name="Henderson C."/>
            <person name="O'Brien R."/>
            <person name="Bibel M."/>
            <person name="Schiess R."/>
            <person name="Aebersold R."/>
            <person name="Watts J.D."/>
        </authorList>
    </citation>
    <scope>GLYCOSYLATION [LARGE SCALE ANALYSIS] AT ASN-243</scope>
    <source>
        <tissue>Leukemic T-cell</tissue>
    </source>
</reference>
<reference key="7">
    <citation type="journal article" date="2008" name="Mol. Cell">
        <title>Paired receptor specificity explained by structures of signal regulatory proteins alone and complexed with CD47.</title>
        <authorList>
            <person name="Hatherley D."/>
            <person name="Graham S.C."/>
            <person name="Turner J."/>
            <person name="Harlos K."/>
            <person name="Stuart D.I."/>
            <person name="Barclay A.N."/>
        </authorList>
    </citation>
    <scope>X-RAY CRYSTALLOGRAPHY (1.7 ANGSTROMS) OF 29-147</scope>
    <scope>DISULFIDE BOND</scope>
</reference>
<accession>Q9P1W8</accession>
<accession>B1AKP6</accession>
<accession>Q5D051</accession>
<accession>Q5JV25</accession>
<accession>Q5MKL4</accession>
<accession>Q8WWA5</accession>
<accession>Q9NQK8</accession>
<keyword id="KW-0002">3D-structure</keyword>
<keyword id="KW-0025">Alternative splicing</keyword>
<keyword id="KW-0130">Cell adhesion</keyword>
<keyword id="KW-1015">Disulfide bond</keyword>
<keyword id="KW-0325">Glycoprotein</keyword>
<keyword id="KW-0393">Immunoglobulin domain</keyword>
<keyword id="KW-0472">Membrane</keyword>
<keyword id="KW-1267">Proteomics identification</keyword>
<keyword id="KW-1185">Reference proteome</keyword>
<keyword id="KW-0677">Repeat</keyword>
<keyword id="KW-0732">Signal</keyword>
<keyword id="KW-0812">Transmembrane</keyword>
<keyword id="KW-1133">Transmembrane helix</keyword>
<evidence type="ECO:0000255" key="1"/>
<evidence type="ECO:0000255" key="2">
    <source>
        <dbReference type="PROSITE-ProRule" id="PRU00114"/>
    </source>
</evidence>
<evidence type="ECO:0000269" key="3">
    <source>
    </source>
</evidence>
<evidence type="ECO:0000269" key="4">
    <source>
    </source>
</evidence>
<evidence type="ECO:0000269" key="5">
    <source>
    </source>
</evidence>
<evidence type="ECO:0000269" key="6">
    <source>
    </source>
</evidence>
<evidence type="ECO:0000303" key="7">
    <source>
    </source>
</evidence>
<evidence type="ECO:0000303" key="8">
    <source>
    </source>
</evidence>
<evidence type="ECO:0000303" key="9">
    <source>
    </source>
</evidence>
<evidence type="ECO:0007829" key="10">
    <source>
        <dbReference type="PDB" id="2JJW"/>
    </source>
</evidence>
<evidence type="ECO:0007829" key="11">
    <source>
        <dbReference type="PDB" id="4I2X"/>
    </source>
</evidence>
<protein>
    <recommendedName>
        <fullName>Signal-regulatory protein gamma</fullName>
        <shortName>SIRP-gamma</shortName>
    </recommendedName>
    <alternativeName>
        <fullName>CD172 antigen-like family member B</fullName>
    </alternativeName>
    <alternativeName>
        <fullName>Signal-regulatory protein beta-2</fullName>
        <shortName>SIRP-b2</shortName>
        <shortName>SIRP-beta-2</shortName>
    </alternativeName>
    <cdAntigenName>CD172g</cdAntigenName>
</protein>
<organism>
    <name type="scientific">Homo sapiens</name>
    <name type="common">Human</name>
    <dbReference type="NCBI Taxonomy" id="9606"/>
    <lineage>
        <taxon>Eukaryota</taxon>
        <taxon>Metazoa</taxon>
        <taxon>Chordata</taxon>
        <taxon>Craniata</taxon>
        <taxon>Vertebrata</taxon>
        <taxon>Euteleostomi</taxon>
        <taxon>Mammalia</taxon>
        <taxon>Eutheria</taxon>
        <taxon>Euarchontoglires</taxon>
        <taxon>Primates</taxon>
        <taxon>Haplorrhini</taxon>
        <taxon>Catarrhini</taxon>
        <taxon>Hominidae</taxon>
        <taxon>Homo</taxon>
    </lineage>
</organism>
<gene>
    <name type="primary">SIRPG</name>
    <name type="synonym">SIRPB2</name>
</gene>
<feature type="signal peptide" evidence="1">
    <location>
        <begin position="1"/>
        <end position="28"/>
    </location>
</feature>
<feature type="chain" id="PRO_0000014957" description="Signal-regulatory protein gamma">
    <location>
        <begin position="29"/>
        <end position="387"/>
    </location>
</feature>
<feature type="topological domain" description="Extracellular" evidence="1">
    <location>
        <begin position="29"/>
        <end position="360"/>
    </location>
</feature>
<feature type="transmembrane region" description="Helical" evidence="1">
    <location>
        <begin position="361"/>
        <end position="383"/>
    </location>
</feature>
<feature type="topological domain" description="Cytoplasmic" evidence="1">
    <location>
        <begin position="384"/>
        <end position="387"/>
    </location>
</feature>
<feature type="domain" description="Ig-like V-type">
    <location>
        <begin position="29"/>
        <end position="137"/>
    </location>
</feature>
<feature type="domain" description="Ig-like C1-type 1">
    <location>
        <begin position="146"/>
        <end position="245"/>
    </location>
</feature>
<feature type="domain" description="Ig-like C1-type 2">
    <location>
        <begin position="252"/>
        <end position="340"/>
    </location>
</feature>
<feature type="glycosylation site" description="N-linked (GlcNAc...) asparagine" evidence="6">
    <location>
        <position position="243"/>
    </location>
</feature>
<feature type="glycosylation site" description="N-linked (GlcNAc...) asparagine" evidence="1">
    <location>
        <position position="268"/>
    </location>
</feature>
<feature type="glycosylation site" description="N-linked (GlcNAc...) asparagine" evidence="1">
    <location>
        <position position="309"/>
    </location>
</feature>
<feature type="glycosylation site" description="N-linked (GlcNAc...) asparagine" evidence="1">
    <location>
        <position position="317"/>
    </location>
</feature>
<feature type="disulfide bond" evidence="2 5">
    <location>
        <begin position="53"/>
        <end position="119"/>
    </location>
</feature>
<feature type="disulfide bond" evidence="2">
    <location>
        <begin position="168"/>
        <end position="226"/>
    </location>
</feature>
<feature type="disulfide bond" evidence="2">
    <location>
        <begin position="271"/>
        <end position="329"/>
    </location>
</feature>
<feature type="splice variant" id="VSP_007027" description="In isoform 2." evidence="7">
    <location>
        <begin position="1"/>
        <end position="33"/>
    </location>
</feature>
<feature type="splice variant" id="VSP_007028" description="In isoform 3." evidence="9">
    <location>
        <begin position="144"/>
        <end position="360"/>
    </location>
</feature>
<feature type="splice variant" id="VSP_026960" description="In isoform 4." evidence="8">
    <location>
        <begin position="250"/>
        <end position="360"/>
    </location>
</feature>
<feature type="sequence variant" id="VAR_049936" description="In dbSNP:rs6043409." evidence="3">
    <original>V</original>
    <variation>A</variation>
    <location>
        <position position="263"/>
    </location>
</feature>
<feature type="sequence variant" id="VAR_049937" description="In dbSNP:rs6034239." evidence="3">
    <original>S</original>
    <variation>L</variation>
    <location>
        <position position="286"/>
    </location>
</feature>
<feature type="strand" evidence="10">
    <location>
        <begin position="39"/>
        <end position="43"/>
    </location>
</feature>
<feature type="strand" evidence="10">
    <location>
        <begin position="49"/>
        <end position="51"/>
    </location>
</feature>
<feature type="strand" evidence="10">
    <location>
        <begin position="54"/>
        <end position="56"/>
    </location>
</feature>
<feature type="strand" evidence="10">
    <location>
        <begin position="64"/>
        <end position="71"/>
    </location>
</feature>
<feature type="strand" evidence="10">
    <location>
        <begin position="75"/>
        <end position="82"/>
    </location>
</feature>
<feature type="strand" evidence="10">
    <location>
        <begin position="88"/>
        <end position="92"/>
    </location>
</feature>
<feature type="strand" evidence="10">
    <location>
        <begin position="104"/>
        <end position="106"/>
    </location>
</feature>
<feature type="helix" evidence="10">
    <location>
        <begin position="111"/>
        <end position="113"/>
    </location>
</feature>
<feature type="strand" evidence="10">
    <location>
        <begin position="115"/>
        <end position="123"/>
    </location>
</feature>
<feature type="strand" evidence="11">
    <location>
        <begin position="126"/>
        <end position="128"/>
    </location>
</feature>
<feature type="strand" evidence="10">
    <location>
        <begin position="130"/>
        <end position="134"/>
    </location>
</feature>
<feature type="strand" evidence="10">
    <location>
        <begin position="138"/>
        <end position="142"/>
    </location>
</feature>
<feature type="strand" evidence="11">
    <location>
        <begin position="150"/>
        <end position="152"/>
    </location>
</feature>
<feature type="strand" evidence="11">
    <location>
        <begin position="163"/>
        <end position="176"/>
    </location>
</feature>
<feature type="strand" evidence="11">
    <location>
        <begin position="179"/>
        <end position="184"/>
    </location>
</feature>
<feature type="strand" evidence="11">
    <location>
        <begin position="192"/>
        <end position="197"/>
    </location>
</feature>
<feature type="strand" evidence="11">
    <location>
        <begin position="205"/>
        <end position="214"/>
    </location>
</feature>
<feature type="strand" evidence="11">
    <location>
        <begin position="223"/>
        <end position="229"/>
    </location>
</feature>
<feature type="turn" evidence="11">
    <location>
        <begin position="231"/>
        <end position="235"/>
    </location>
</feature>
<feature type="strand" evidence="11">
    <location>
        <begin position="238"/>
        <end position="243"/>
    </location>
</feature>
<feature type="helix" evidence="11">
    <location>
        <begin position="244"/>
        <end position="246"/>
    </location>
</feature>
<feature type="strand" evidence="11">
    <location>
        <begin position="253"/>
        <end position="260"/>
    </location>
</feature>
<feature type="strand" evidence="11">
    <location>
        <begin position="262"/>
        <end position="279"/>
    </location>
</feature>
<feature type="strand" evidence="11">
    <location>
        <begin position="281"/>
        <end position="287"/>
    </location>
</feature>
<feature type="strand" evidence="11">
    <location>
        <begin position="297"/>
        <end position="302"/>
    </location>
</feature>
<feature type="strand" evidence="11">
    <location>
        <begin position="308"/>
        <end position="317"/>
    </location>
</feature>
<feature type="strand" evidence="11">
    <location>
        <begin position="326"/>
        <end position="333"/>
    </location>
</feature>
<feature type="strand" evidence="11">
    <location>
        <begin position="339"/>
        <end position="344"/>
    </location>
</feature>